<feature type="chain" id="PRO_1000184290" description="ATP synthase subunit a">
    <location>
        <begin position="1"/>
        <end position="264"/>
    </location>
</feature>
<feature type="transmembrane region" description="Helical" evidence="1">
    <location>
        <begin position="29"/>
        <end position="49"/>
    </location>
</feature>
<feature type="transmembrane region" description="Helical" evidence="1">
    <location>
        <begin position="90"/>
        <end position="110"/>
    </location>
</feature>
<feature type="transmembrane region" description="Helical" evidence="1">
    <location>
        <begin position="134"/>
        <end position="154"/>
    </location>
</feature>
<feature type="transmembrane region" description="Helical" evidence="1">
    <location>
        <begin position="177"/>
        <end position="197"/>
    </location>
</feature>
<feature type="transmembrane region" description="Helical" evidence="1">
    <location>
        <begin position="208"/>
        <end position="228"/>
    </location>
</feature>
<feature type="transmembrane region" description="Helical" evidence="1">
    <location>
        <begin position="235"/>
        <end position="255"/>
    </location>
</feature>
<accession>B8EDV6</accession>
<protein>
    <recommendedName>
        <fullName evidence="1">ATP synthase subunit a</fullName>
    </recommendedName>
    <alternativeName>
        <fullName evidence="1">ATP synthase F0 sector subunit a</fullName>
    </alternativeName>
    <alternativeName>
        <fullName evidence="1">F-ATPase subunit 6</fullName>
    </alternativeName>
</protein>
<organism>
    <name type="scientific">Shewanella baltica (strain OS223)</name>
    <dbReference type="NCBI Taxonomy" id="407976"/>
    <lineage>
        <taxon>Bacteria</taxon>
        <taxon>Pseudomonadati</taxon>
        <taxon>Pseudomonadota</taxon>
        <taxon>Gammaproteobacteria</taxon>
        <taxon>Alteromonadales</taxon>
        <taxon>Shewanellaceae</taxon>
        <taxon>Shewanella</taxon>
    </lineage>
</organism>
<gene>
    <name evidence="1" type="primary">atpB</name>
    <name type="ordered locus">Sbal223_4316</name>
</gene>
<name>ATP6_SHEB2</name>
<sequence>MAATGEALTPQGYIQHHLTNLSVGEGFWTWHIDSLFFSVGLGVLFLWIFRSVGKKATSGVPGKLQCFVEMIVEFVNNSVKESFHGRNALIAPLALTIFVWVFMMNFMDMIPVDWLPHAASLMGIPYLKAVPTTDVNITFSLAIGVFLLIIFYSIKVKGVSGFVKELTLQPFNHKAMIPVNLLLETVTLIAKPISLALRLFGNLYAGELIFILIALMYGTNLLLSTLGVTLQLGWLIFHILVITLQAFIFMMLTIVYLSMAHEDH</sequence>
<reference key="1">
    <citation type="submission" date="2008-12" db="EMBL/GenBank/DDBJ databases">
        <title>Complete sequence of chromosome of Shewanella baltica OS223.</title>
        <authorList>
            <consortium name="US DOE Joint Genome Institute"/>
            <person name="Lucas S."/>
            <person name="Copeland A."/>
            <person name="Lapidus A."/>
            <person name="Glavina del Rio T."/>
            <person name="Dalin E."/>
            <person name="Tice H."/>
            <person name="Bruce D."/>
            <person name="Goodwin L."/>
            <person name="Pitluck S."/>
            <person name="Chertkov O."/>
            <person name="Meincke L."/>
            <person name="Brettin T."/>
            <person name="Detter J.C."/>
            <person name="Han C."/>
            <person name="Kuske C.R."/>
            <person name="Larimer F."/>
            <person name="Land M."/>
            <person name="Hauser L."/>
            <person name="Kyrpides N."/>
            <person name="Ovchinnikova G."/>
            <person name="Brettar I."/>
            <person name="Rodrigues J."/>
            <person name="Konstantinidis K."/>
            <person name="Tiedje J."/>
        </authorList>
    </citation>
    <scope>NUCLEOTIDE SEQUENCE [LARGE SCALE GENOMIC DNA]</scope>
    <source>
        <strain>OS223</strain>
    </source>
</reference>
<keyword id="KW-0066">ATP synthesis</keyword>
<keyword id="KW-0997">Cell inner membrane</keyword>
<keyword id="KW-1003">Cell membrane</keyword>
<keyword id="KW-0138">CF(0)</keyword>
<keyword id="KW-0375">Hydrogen ion transport</keyword>
<keyword id="KW-0406">Ion transport</keyword>
<keyword id="KW-0472">Membrane</keyword>
<keyword id="KW-0812">Transmembrane</keyword>
<keyword id="KW-1133">Transmembrane helix</keyword>
<keyword id="KW-0813">Transport</keyword>
<dbReference type="EMBL" id="CP001252">
    <property type="protein sequence ID" value="ACK48782.1"/>
    <property type="molecule type" value="Genomic_DNA"/>
</dbReference>
<dbReference type="RefSeq" id="WP_006083839.1">
    <property type="nucleotide sequence ID" value="NC_011663.1"/>
</dbReference>
<dbReference type="SMR" id="B8EDV6"/>
<dbReference type="GeneID" id="11774466"/>
<dbReference type="KEGG" id="sbp:Sbal223_4316"/>
<dbReference type="HOGENOM" id="CLU_041018_1_0_6"/>
<dbReference type="Proteomes" id="UP000002507">
    <property type="component" value="Chromosome"/>
</dbReference>
<dbReference type="GO" id="GO:0005886">
    <property type="term" value="C:plasma membrane"/>
    <property type="evidence" value="ECO:0007669"/>
    <property type="project" value="UniProtKB-SubCell"/>
</dbReference>
<dbReference type="GO" id="GO:0045259">
    <property type="term" value="C:proton-transporting ATP synthase complex"/>
    <property type="evidence" value="ECO:0007669"/>
    <property type="project" value="UniProtKB-KW"/>
</dbReference>
<dbReference type="GO" id="GO:0046933">
    <property type="term" value="F:proton-transporting ATP synthase activity, rotational mechanism"/>
    <property type="evidence" value="ECO:0007669"/>
    <property type="project" value="UniProtKB-UniRule"/>
</dbReference>
<dbReference type="GO" id="GO:0042777">
    <property type="term" value="P:proton motive force-driven plasma membrane ATP synthesis"/>
    <property type="evidence" value="ECO:0007669"/>
    <property type="project" value="TreeGrafter"/>
</dbReference>
<dbReference type="CDD" id="cd00310">
    <property type="entry name" value="ATP-synt_Fo_a_6"/>
    <property type="match status" value="1"/>
</dbReference>
<dbReference type="FunFam" id="1.20.120.220:FF:000002">
    <property type="entry name" value="ATP synthase subunit a"/>
    <property type="match status" value="1"/>
</dbReference>
<dbReference type="Gene3D" id="1.20.120.220">
    <property type="entry name" value="ATP synthase, F0 complex, subunit A"/>
    <property type="match status" value="1"/>
</dbReference>
<dbReference type="HAMAP" id="MF_01393">
    <property type="entry name" value="ATP_synth_a_bact"/>
    <property type="match status" value="1"/>
</dbReference>
<dbReference type="InterPro" id="IPR045082">
    <property type="entry name" value="ATP_syn_F0_a_bact/chloroplast"/>
</dbReference>
<dbReference type="InterPro" id="IPR000568">
    <property type="entry name" value="ATP_synth_F0_asu"/>
</dbReference>
<dbReference type="InterPro" id="IPR023011">
    <property type="entry name" value="ATP_synth_F0_asu_AS"/>
</dbReference>
<dbReference type="InterPro" id="IPR035908">
    <property type="entry name" value="F0_ATP_A_sf"/>
</dbReference>
<dbReference type="NCBIfam" id="TIGR01131">
    <property type="entry name" value="ATP_synt_6_or_A"/>
    <property type="match status" value="1"/>
</dbReference>
<dbReference type="NCBIfam" id="NF004477">
    <property type="entry name" value="PRK05815.1-1"/>
    <property type="match status" value="1"/>
</dbReference>
<dbReference type="PANTHER" id="PTHR42823">
    <property type="entry name" value="ATP SYNTHASE SUBUNIT A, CHLOROPLASTIC"/>
    <property type="match status" value="1"/>
</dbReference>
<dbReference type="PANTHER" id="PTHR42823:SF3">
    <property type="entry name" value="ATP SYNTHASE SUBUNIT A, CHLOROPLASTIC"/>
    <property type="match status" value="1"/>
</dbReference>
<dbReference type="Pfam" id="PF00119">
    <property type="entry name" value="ATP-synt_A"/>
    <property type="match status" value="1"/>
</dbReference>
<dbReference type="PRINTS" id="PR00123">
    <property type="entry name" value="ATPASEA"/>
</dbReference>
<dbReference type="SUPFAM" id="SSF81336">
    <property type="entry name" value="F1F0 ATP synthase subunit A"/>
    <property type="match status" value="1"/>
</dbReference>
<dbReference type="PROSITE" id="PS00449">
    <property type="entry name" value="ATPASE_A"/>
    <property type="match status" value="1"/>
</dbReference>
<evidence type="ECO:0000255" key="1">
    <source>
        <dbReference type="HAMAP-Rule" id="MF_01393"/>
    </source>
</evidence>
<proteinExistence type="inferred from homology"/>
<comment type="function">
    <text evidence="1">Key component of the proton channel; it plays a direct role in the translocation of protons across the membrane.</text>
</comment>
<comment type="subunit">
    <text evidence="1">F-type ATPases have 2 components, CF(1) - the catalytic core - and CF(0) - the membrane proton channel. CF(1) has five subunits: alpha(3), beta(3), gamma(1), delta(1), epsilon(1). CF(0) has three main subunits: a(1), b(2) and c(9-12). The alpha and beta chains form an alternating ring which encloses part of the gamma chain. CF(1) is attached to CF(0) by a central stalk formed by the gamma and epsilon chains, while a peripheral stalk is formed by the delta and b chains.</text>
</comment>
<comment type="subcellular location">
    <subcellularLocation>
        <location evidence="1">Cell inner membrane</location>
        <topology evidence="1">Multi-pass membrane protein</topology>
    </subcellularLocation>
</comment>
<comment type="similarity">
    <text evidence="1">Belongs to the ATPase A chain family.</text>
</comment>